<dbReference type="EMBL" id="AK094207">
    <property type="protein sequence ID" value="BAC04311.1"/>
    <property type="molecule type" value="mRNA"/>
</dbReference>
<dbReference type="EMBL" id="AL834131">
    <property type="protein sequence ID" value="CAD38848.1"/>
    <property type="molecule type" value="mRNA"/>
</dbReference>
<dbReference type="EMBL" id="BC023623">
    <property type="protein sequence ID" value="AAH23623.1"/>
    <property type="molecule type" value="mRNA"/>
</dbReference>
<dbReference type="EMBL" id="BC027935">
    <property type="protein sequence ID" value="AAH27935.1"/>
    <property type="molecule type" value="mRNA"/>
</dbReference>
<dbReference type="CCDS" id="CCDS58662.1">
    <molecule id="Q8N9M1-1"/>
</dbReference>
<dbReference type="RefSeq" id="NP_001243369.1">
    <molecule id="Q8N9M1-1"/>
    <property type="nucleotide sequence ID" value="NM_001256440.1"/>
</dbReference>
<dbReference type="RefSeq" id="NP_001243370.1">
    <property type="nucleotide sequence ID" value="NM_001256441.1"/>
</dbReference>
<dbReference type="RefSeq" id="XP_016881784.1">
    <property type="nucleotide sequence ID" value="XM_017026295.1"/>
</dbReference>
<dbReference type="RefSeq" id="XP_047294134.1">
    <molecule id="Q8N9M1-2"/>
    <property type="nucleotide sequence ID" value="XM_047438178.1"/>
</dbReference>
<dbReference type="RefSeq" id="XP_047294135.1">
    <molecule id="Q8N9M1-3"/>
    <property type="nucleotide sequence ID" value="XM_047438179.1"/>
</dbReference>
<dbReference type="RefSeq" id="XP_054175808.1">
    <molecule id="Q8N9M1-3"/>
    <property type="nucleotide sequence ID" value="XM_054319833.1"/>
</dbReference>
<dbReference type="SMR" id="Q8N9M1"/>
<dbReference type="BioGRID" id="125997">
    <property type="interactions" value="37"/>
</dbReference>
<dbReference type="FunCoup" id="Q8N9M1">
    <property type="interactions" value="2281"/>
</dbReference>
<dbReference type="IntAct" id="Q8N9M1">
    <property type="interactions" value="19"/>
</dbReference>
<dbReference type="STRING" id="9606.ENSP00000463159"/>
<dbReference type="GlyGen" id="Q8N9M1">
    <property type="glycosylation" value="1 site"/>
</dbReference>
<dbReference type="iPTMnet" id="Q8N9M1"/>
<dbReference type="PhosphoSitePlus" id="Q8N9M1"/>
<dbReference type="BioMuta" id="C19orf47"/>
<dbReference type="DMDM" id="74729722"/>
<dbReference type="jPOST" id="Q8N9M1"/>
<dbReference type="MassIVE" id="Q8N9M1"/>
<dbReference type="PaxDb" id="9606-ENSP00000463159"/>
<dbReference type="PeptideAtlas" id="Q8N9M1"/>
<dbReference type="ProteomicsDB" id="72556">
    <molecule id="Q8N9M1-1"/>
</dbReference>
<dbReference type="ProteomicsDB" id="72557">
    <molecule id="Q8N9M1-2"/>
</dbReference>
<dbReference type="ProteomicsDB" id="72558">
    <molecule id="Q8N9M1-3"/>
</dbReference>
<dbReference type="Pumba" id="Q8N9M1"/>
<dbReference type="Antibodypedia" id="30505">
    <property type="antibodies" value="107 antibodies from 16 providers"/>
</dbReference>
<dbReference type="DNASU" id="126526"/>
<dbReference type="Ensembl" id="ENST00000392035.6">
    <molecule id="Q8N9M1-2"/>
    <property type="protein sequence ID" value="ENSP00000375889.2"/>
    <property type="gene ID" value="ENSG00000160392.14"/>
</dbReference>
<dbReference type="Ensembl" id="ENST00000582783.5">
    <molecule id="Q8N9M1-1"/>
    <property type="protein sequence ID" value="ENSP00000463159.1"/>
    <property type="gene ID" value="ENSG00000160392.14"/>
</dbReference>
<dbReference type="GeneID" id="126526"/>
<dbReference type="KEGG" id="hsa:126526"/>
<dbReference type="UCSC" id="uc002onh.5">
    <molecule id="Q8N9M1-1"/>
    <property type="organism name" value="human"/>
</dbReference>
<dbReference type="AGR" id="HGNC:26723"/>
<dbReference type="CTD" id="126526"/>
<dbReference type="DisGeNET" id="126526"/>
<dbReference type="GeneCards" id="C19orf47"/>
<dbReference type="HGNC" id="HGNC:26723">
    <property type="gene designation" value="C19orf47"/>
</dbReference>
<dbReference type="HPA" id="ENSG00000160392">
    <property type="expression patterns" value="Group enriched (heart muscle, skeletal muscle, tongue)"/>
</dbReference>
<dbReference type="neXtProt" id="NX_Q8N9M1"/>
<dbReference type="OpenTargets" id="ENSG00000160392"/>
<dbReference type="PharmGKB" id="PA145149543"/>
<dbReference type="VEuPathDB" id="HostDB:ENSG00000160392"/>
<dbReference type="eggNOG" id="KOG3930">
    <property type="taxonomic scope" value="Eukaryota"/>
</dbReference>
<dbReference type="GeneTree" id="ENSGT00390000005773"/>
<dbReference type="HOGENOM" id="CLU_047260_0_0_1"/>
<dbReference type="InParanoid" id="Q8N9M1"/>
<dbReference type="OMA" id="DHRIQKN"/>
<dbReference type="OrthoDB" id="10067653at2759"/>
<dbReference type="PAN-GO" id="Q8N9M1">
    <property type="GO annotations" value="1 GO annotation based on evolutionary models"/>
</dbReference>
<dbReference type="PhylomeDB" id="Q8N9M1"/>
<dbReference type="TreeFam" id="TF317361"/>
<dbReference type="PathwayCommons" id="Q8N9M1"/>
<dbReference type="SignaLink" id="Q8N9M1"/>
<dbReference type="BioGRID-ORCS" id="126526">
    <property type="hits" value="12 hits in 1131 CRISPR screens"/>
</dbReference>
<dbReference type="ChiTaRS" id="C19orf47">
    <property type="organism name" value="human"/>
</dbReference>
<dbReference type="GenomeRNAi" id="126526"/>
<dbReference type="Pharos" id="Q8N9M1">
    <property type="development level" value="Tdark"/>
</dbReference>
<dbReference type="PRO" id="PR:Q8N9M1"/>
<dbReference type="Proteomes" id="UP000005640">
    <property type="component" value="Chromosome 19"/>
</dbReference>
<dbReference type="RNAct" id="Q8N9M1">
    <property type="molecule type" value="protein"/>
</dbReference>
<dbReference type="Bgee" id="ENSG00000160392">
    <property type="expression patterns" value="Expressed in apex of heart and 101 other cell types or tissues"/>
</dbReference>
<dbReference type="ExpressionAtlas" id="Q8N9M1">
    <property type="expression patterns" value="baseline and differential"/>
</dbReference>
<dbReference type="GO" id="GO:0005654">
    <property type="term" value="C:nucleoplasm"/>
    <property type="evidence" value="ECO:0000314"/>
    <property type="project" value="HPA"/>
</dbReference>
<dbReference type="GO" id="GO:0005634">
    <property type="term" value="C:nucleus"/>
    <property type="evidence" value="ECO:0000318"/>
    <property type="project" value="GO_Central"/>
</dbReference>
<dbReference type="CDD" id="cd09531">
    <property type="entry name" value="SAM_CS047"/>
    <property type="match status" value="1"/>
</dbReference>
<dbReference type="FunFam" id="1.10.150.50:FF:000041">
    <property type="entry name" value="Chromosome 19 C19orf47 homolog"/>
    <property type="match status" value="1"/>
</dbReference>
<dbReference type="Gene3D" id="1.10.150.50">
    <property type="entry name" value="Transcription Factor, Ets-1"/>
    <property type="match status" value="1"/>
</dbReference>
<dbReference type="InterPro" id="IPR039161">
    <property type="entry name" value="C19orf47-like"/>
</dbReference>
<dbReference type="InterPro" id="IPR040772">
    <property type="entry name" value="C19orf47_SAM"/>
</dbReference>
<dbReference type="InterPro" id="IPR041477">
    <property type="entry name" value="DUF5577"/>
</dbReference>
<dbReference type="InterPro" id="IPR013761">
    <property type="entry name" value="SAM/pointed_sf"/>
</dbReference>
<dbReference type="PANTHER" id="PTHR21359">
    <property type="entry name" value="DUF5577 DOMAIN-CONTAINING PROTEIN"/>
    <property type="match status" value="1"/>
</dbReference>
<dbReference type="PANTHER" id="PTHR21359:SF1">
    <property type="entry name" value="DUF5577 DOMAIN-CONTAINING PROTEIN"/>
    <property type="match status" value="1"/>
</dbReference>
<dbReference type="Pfam" id="PF17740">
    <property type="entry name" value="DUF5577"/>
    <property type="match status" value="1"/>
</dbReference>
<dbReference type="Pfam" id="PF18017">
    <property type="entry name" value="SAM_4"/>
    <property type="match status" value="1"/>
</dbReference>
<dbReference type="SUPFAM" id="SSF47769">
    <property type="entry name" value="SAM/Pointed domain"/>
    <property type="match status" value="1"/>
</dbReference>
<feature type="chain" id="PRO_0000291860" description="Uncharacterized protein C19orf47">
    <location>
        <begin position="1"/>
        <end position="422"/>
    </location>
</feature>
<feature type="region of interest" description="Disordered" evidence="1">
    <location>
        <begin position="144"/>
        <end position="166"/>
    </location>
</feature>
<feature type="region of interest" description="Disordered" evidence="1">
    <location>
        <begin position="251"/>
        <end position="285"/>
    </location>
</feature>
<feature type="region of interest" description="Disordered" evidence="1">
    <location>
        <begin position="299"/>
        <end position="324"/>
    </location>
</feature>
<feature type="compositionally biased region" description="Acidic residues" evidence="1">
    <location>
        <begin position="271"/>
        <end position="282"/>
    </location>
</feature>
<feature type="compositionally biased region" description="Low complexity" evidence="1">
    <location>
        <begin position="310"/>
        <end position="324"/>
    </location>
</feature>
<feature type="modified residue" description="Phosphoserine" evidence="4 6">
    <location>
        <position position="124"/>
    </location>
</feature>
<feature type="modified residue" description="Phosphoserine" evidence="4">
    <location>
        <position position="126"/>
    </location>
</feature>
<feature type="modified residue" description="Phosphoserine" evidence="6">
    <location>
        <position position="151"/>
    </location>
</feature>
<feature type="modified residue" description="Phosphoserine" evidence="5">
    <location>
        <position position="280"/>
    </location>
</feature>
<feature type="modified residue" description="Phosphoserine" evidence="6">
    <location>
        <position position="306"/>
    </location>
</feature>
<feature type="modified residue" description="Phosphoserine" evidence="6">
    <location>
        <position position="351"/>
    </location>
</feature>
<feature type="cross-link" description="Glycyl lysine isopeptide (Lys-Gly) (interchain with G-Cter in SUMO2)" evidence="7">
    <location>
        <position position="250"/>
    </location>
</feature>
<feature type="splice variant" id="VSP_026276" description="In isoform 3." evidence="2">
    <location>
        <begin position="1"/>
        <end position="141"/>
    </location>
</feature>
<feature type="splice variant" id="VSP_026275" description="In isoform 2." evidence="2 3">
    <location>
        <begin position="1"/>
        <end position="67"/>
    </location>
</feature>
<comment type="interaction">
    <interactant intactId="EBI-2835503">
        <id>Q8N9M1</id>
    </interactant>
    <interactant intactId="EBI-4315078">
        <id>Q9P121</id>
        <label>NTM</label>
    </interactant>
    <organismsDiffer>false</organismsDiffer>
    <experiments>3</experiments>
</comment>
<comment type="interaction">
    <interactant intactId="EBI-10979594">
        <id>Q8N9M1-2</id>
    </interactant>
    <interactant intactId="EBI-19954058">
        <id>O15499</id>
        <label>GSC2</label>
    </interactant>
    <organismsDiffer>false</organismsDiffer>
    <experiments>3</experiments>
</comment>
<comment type="interaction">
    <interactant intactId="EBI-10979594">
        <id>Q8N9M1-2</id>
    </interactant>
    <interactant intactId="EBI-357793">
        <id>P60900</id>
        <label>PSMA6</label>
    </interactant>
    <organismsDiffer>false</organismsDiffer>
    <experiments>3</experiments>
</comment>
<comment type="alternative products">
    <event type="alternative splicing"/>
    <isoform>
        <id>Q8N9M1-1</id>
        <name>1</name>
        <sequence type="displayed"/>
    </isoform>
    <isoform>
        <id>Q8N9M1-2</id>
        <name>2</name>
        <sequence type="described" ref="VSP_026275"/>
    </isoform>
    <isoform>
        <id>Q8N9M1-3</id>
        <name>3</name>
        <sequence type="described" ref="VSP_026276"/>
    </isoform>
</comment>
<accession>Q8N9M1</accession>
<accession>Q8IZ33</accession>
<accession>Q8N0V9</accession>
<reference key="1">
    <citation type="journal article" date="2004" name="Nat. Genet.">
        <title>Complete sequencing and characterization of 21,243 full-length human cDNAs.</title>
        <authorList>
            <person name="Ota T."/>
            <person name="Suzuki Y."/>
            <person name="Nishikawa T."/>
            <person name="Otsuki T."/>
            <person name="Sugiyama T."/>
            <person name="Irie R."/>
            <person name="Wakamatsu A."/>
            <person name="Hayashi K."/>
            <person name="Sato H."/>
            <person name="Nagai K."/>
            <person name="Kimura K."/>
            <person name="Makita H."/>
            <person name="Sekine M."/>
            <person name="Obayashi M."/>
            <person name="Nishi T."/>
            <person name="Shibahara T."/>
            <person name="Tanaka T."/>
            <person name="Ishii S."/>
            <person name="Yamamoto J."/>
            <person name="Saito K."/>
            <person name="Kawai Y."/>
            <person name="Isono Y."/>
            <person name="Nakamura Y."/>
            <person name="Nagahari K."/>
            <person name="Murakami K."/>
            <person name="Yasuda T."/>
            <person name="Iwayanagi T."/>
            <person name="Wagatsuma M."/>
            <person name="Shiratori A."/>
            <person name="Sudo H."/>
            <person name="Hosoiri T."/>
            <person name="Kaku Y."/>
            <person name="Kodaira H."/>
            <person name="Kondo H."/>
            <person name="Sugawara M."/>
            <person name="Takahashi M."/>
            <person name="Kanda K."/>
            <person name="Yokoi T."/>
            <person name="Furuya T."/>
            <person name="Kikkawa E."/>
            <person name="Omura Y."/>
            <person name="Abe K."/>
            <person name="Kamihara K."/>
            <person name="Katsuta N."/>
            <person name="Sato K."/>
            <person name="Tanikawa M."/>
            <person name="Yamazaki M."/>
            <person name="Ninomiya K."/>
            <person name="Ishibashi T."/>
            <person name="Yamashita H."/>
            <person name="Murakawa K."/>
            <person name="Fujimori K."/>
            <person name="Tanai H."/>
            <person name="Kimata M."/>
            <person name="Watanabe M."/>
            <person name="Hiraoka S."/>
            <person name="Chiba Y."/>
            <person name="Ishida S."/>
            <person name="Ono Y."/>
            <person name="Takiguchi S."/>
            <person name="Watanabe S."/>
            <person name="Yosida M."/>
            <person name="Hotuta T."/>
            <person name="Kusano J."/>
            <person name="Kanehori K."/>
            <person name="Takahashi-Fujii A."/>
            <person name="Hara H."/>
            <person name="Tanase T.-O."/>
            <person name="Nomura Y."/>
            <person name="Togiya S."/>
            <person name="Komai F."/>
            <person name="Hara R."/>
            <person name="Takeuchi K."/>
            <person name="Arita M."/>
            <person name="Imose N."/>
            <person name="Musashino K."/>
            <person name="Yuuki H."/>
            <person name="Oshima A."/>
            <person name="Sasaki N."/>
            <person name="Aotsuka S."/>
            <person name="Yoshikawa Y."/>
            <person name="Matsunawa H."/>
            <person name="Ichihara T."/>
            <person name="Shiohata N."/>
            <person name="Sano S."/>
            <person name="Moriya S."/>
            <person name="Momiyama H."/>
            <person name="Satoh N."/>
            <person name="Takami S."/>
            <person name="Terashima Y."/>
            <person name="Suzuki O."/>
            <person name="Nakagawa S."/>
            <person name="Senoh A."/>
            <person name="Mizoguchi H."/>
            <person name="Goto Y."/>
            <person name="Shimizu F."/>
            <person name="Wakebe H."/>
            <person name="Hishigaki H."/>
            <person name="Watanabe T."/>
            <person name="Sugiyama A."/>
            <person name="Takemoto M."/>
            <person name="Kawakami B."/>
            <person name="Yamazaki M."/>
            <person name="Watanabe K."/>
            <person name="Kumagai A."/>
            <person name="Itakura S."/>
            <person name="Fukuzumi Y."/>
            <person name="Fujimori Y."/>
            <person name="Komiyama M."/>
            <person name="Tashiro H."/>
            <person name="Tanigami A."/>
            <person name="Fujiwara T."/>
            <person name="Ono T."/>
            <person name="Yamada K."/>
            <person name="Fujii Y."/>
            <person name="Ozaki K."/>
            <person name="Hirao M."/>
            <person name="Ohmori Y."/>
            <person name="Kawabata A."/>
            <person name="Hikiji T."/>
            <person name="Kobatake N."/>
            <person name="Inagaki H."/>
            <person name="Ikema Y."/>
            <person name="Okamoto S."/>
            <person name="Okitani R."/>
            <person name="Kawakami T."/>
            <person name="Noguchi S."/>
            <person name="Itoh T."/>
            <person name="Shigeta K."/>
            <person name="Senba T."/>
            <person name="Matsumura K."/>
            <person name="Nakajima Y."/>
            <person name="Mizuno T."/>
            <person name="Morinaga M."/>
            <person name="Sasaki M."/>
            <person name="Togashi T."/>
            <person name="Oyama M."/>
            <person name="Hata H."/>
            <person name="Watanabe M."/>
            <person name="Komatsu T."/>
            <person name="Mizushima-Sugano J."/>
            <person name="Satoh T."/>
            <person name="Shirai Y."/>
            <person name="Takahashi Y."/>
            <person name="Nakagawa K."/>
            <person name="Okumura K."/>
            <person name="Nagase T."/>
            <person name="Nomura N."/>
            <person name="Kikuchi H."/>
            <person name="Masuho Y."/>
            <person name="Yamashita R."/>
            <person name="Nakai K."/>
            <person name="Yada T."/>
            <person name="Nakamura Y."/>
            <person name="Ohara O."/>
            <person name="Isogai T."/>
            <person name="Sugano S."/>
        </authorList>
    </citation>
    <scope>NUCLEOTIDE SEQUENCE [LARGE SCALE MRNA] (ISOFORM 1)</scope>
    <source>
        <tissue>Glial tumor</tissue>
    </source>
</reference>
<reference key="2">
    <citation type="journal article" date="2007" name="BMC Genomics">
        <title>The full-ORF clone resource of the German cDNA consortium.</title>
        <authorList>
            <person name="Bechtel S."/>
            <person name="Rosenfelder H."/>
            <person name="Duda A."/>
            <person name="Schmidt C.P."/>
            <person name="Ernst U."/>
            <person name="Wellenreuther R."/>
            <person name="Mehrle A."/>
            <person name="Schuster C."/>
            <person name="Bahr A."/>
            <person name="Bloecker H."/>
            <person name="Heubner D."/>
            <person name="Hoerlein A."/>
            <person name="Michel G."/>
            <person name="Wedler H."/>
            <person name="Koehrer K."/>
            <person name="Ottenwaelder B."/>
            <person name="Poustka A."/>
            <person name="Wiemann S."/>
            <person name="Schupp I."/>
        </authorList>
    </citation>
    <scope>NUCLEOTIDE SEQUENCE [LARGE SCALE MRNA] (ISOFORM 2)</scope>
    <source>
        <tissue>Brain</tissue>
    </source>
</reference>
<reference key="3">
    <citation type="journal article" date="2004" name="Genome Res.">
        <title>The status, quality, and expansion of the NIH full-length cDNA project: the Mammalian Gene Collection (MGC).</title>
        <authorList>
            <consortium name="The MGC Project Team"/>
        </authorList>
    </citation>
    <scope>NUCLEOTIDE SEQUENCE [LARGE SCALE MRNA] (ISOFORMS 2 AND 3)</scope>
    <source>
        <tissue>Lung</tissue>
    </source>
</reference>
<reference key="4">
    <citation type="journal article" date="2008" name="Proc. Natl. Acad. Sci. U.S.A.">
        <title>A quantitative atlas of mitotic phosphorylation.</title>
        <authorList>
            <person name="Dephoure N."/>
            <person name="Zhou C."/>
            <person name="Villen J."/>
            <person name="Beausoleil S.A."/>
            <person name="Bakalarski C.E."/>
            <person name="Elledge S.J."/>
            <person name="Gygi S.P."/>
        </authorList>
    </citation>
    <scope>PHOSPHORYLATION [LARGE SCALE ANALYSIS] AT SER-124 AND SER-126</scope>
    <scope>IDENTIFICATION BY MASS SPECTROMETRY [LARGE SCALE ANALYSIS]</scope>
    <source>
        <tissue>Cervix carcinoma</tissue>
    </source>
</reference>
<reference key="5">
    <citation type="journal article" date="2009" name="Sci. Signal.">
        <title>Quantitative phosphoproteomic analysis of T cell receptor signaling reveals system-wide modulation of protein-protein interactions.</title>
        <authorList>
            <person name="Mayya V."/>
            <person name="Lundgren D.H."/>
            <person name="Hwang S.-I."/>
            <person name="Rezaul K."/>
            <person name="Wu L."/>
            <person name="Eng J.K."/>
            <person name="Rodionov V."/>
            <person name="Han D.K."/>
        </authorList>
    </citation>
    <scope>PHOSPHORYLATION [LARGE SCALE ANALYSIS] AT SER-280</scope>
    <scope>IDENTIFICATION BY MASS SPECTROMETRY [LARGE SCALE ANALYSIS]</scope>
    <source>
        <tissue>Leukemic T-cell</tissue>
    </source>
</reference>
<reference key="6">
    <citation type="journal article" date="2013" name="J. Proteome Res.">
        <title>Toward a comprehensive characterization of a human cancer cell phosphoproteome.</title>
        <authorList>
            <person name="Zhou H."/>
            <person name="Di Palma S."/>
            <person name="Preisinger C."/>
            <person name="Peng M."/>
            <person name="Polat A.N."/>
            <person name="Heck A.J."/>
            <person name="Mohammed S."/>
        </authorList>
    </citation>
    <scope>PHOSPHORYLATION [LARGE SCALE ANALYSIS] AT SER-124; SER-151; SER-306 AND SER-351</scope>
    <scope>IDENTIFICATION BY MASS SPECTROMETRY [LARGE SCALE ANALYSIS]</scope>
    <source>
        <tissue>Cervix carcinoma</tissue>
        <tissue>Erythroleukemia</tissue>
    </source>
</reference>
<reference key="7">
    <citation type="journal article" date="2017" name="Nat. Struct. Mol. Biol.">
        <title>Site-specific mapping of the human SUMO proteome reveals co-modification with phosphorylation.</title>
        <authorList>
            <person name="Hendriks I.A."/>
            <person name="Lyon D."/>
            <person name="Young C."/>
            <person name="Jensen L.J."/>
            <person name="Vertegaal A.C."/>
            <person name="Nielsen M.L."/>
        </authorList>
    </citation>
    <scope>SUMOYLATION [LARGE SCALE ANALYSIS] AT LYS-250</scope>
    <scope>IDENTIFICATION BY MASS SPECTROMETRY [LARGE SCALE ANALYSIS]</scope>
</reference>
<organism>
    <name type="scientific">Homo sapiens</name>
    <name type="common">Human</name>
    <dbReference type="NCBI Taxonomy" id="9606"/>
    <lineage>
        <taxon>Eukaryota</taxon>
        <taxon>Metazoa</taxon>
        <taxon>Chordata</taxon>
        <taxon>Craniata</taxon>
        <taxon>Vertebrata</taxon>
        <taxon>Euteleostomi</taxon>
        <taxon>Mammalia</taxon>
        <taxon>Eutheria</taxon>
        <taxon>Euarchontoglires</taxon>
        <taxon>Primates</taxon>
        <taxon>Haplorrhini</taxon>
        <taxon>Catarrhini</taxon>
        <taxon>Hominidae</taxon>
        <taxon>Homo</taxon>
    </lineage>
</organism>
<proteinExistence type="evidence at protein level"/>
<protein>
    <recommendedName>
        <fullName>Uncharacterized protein C19orf47</fullName>
    </recommendedName>
</protein>
<evidence type="ECO:0000256" key="1">
    <source>
        <dbReference type="SAM" id="MobiDB-lite"/>
    </source>
</evidence>
<evidence type="ECO:0000303" key="2">
    <source>
    </source>
</evidence>
<evidence type="ECO:0000303" key="3">
    <source>
    </source>
</evidence>
<evidence type="ECO:0007744" key="4">
    <source>
    </source>
</evidence>
<evidence type="ECO:0007744" key="5">
    <source>
    </source>
</evidence>
<evidence type="ECO:0007744" key="6">
    <source>
    </source>
</evidence>
<evidence type="ECO:0007744" key="7">
    <source>
    </source>
</evidence>
<name>CS047_HUMAN</name>
<keyword id="KW-0025">Alternative splicing</keyword>
<keyword id="KW-1017">Isopeptide bond</keyword>
<keyword id="KW-0597">Phosphoprotein</keyword>
<keyword id="KW-1267">Proteomics identification</keyword>
<keyword id="KW-1185">Reference proteome</keyword>
<keyword id="KW-0832">Ubl conjugation</keyword>
<gene>
    <name type="primary">C19orf47</name>
</gene>
<sequence length="422" mass="44746">MVMAALSLVAACWGRAAADESVQLPAAPGSSVRARETMVSVTMATSEWIQFFKEAGIPPGPAVNYAVMFVDNRIQKSMLLDLNKEIMNELGVTVVGDIIAILKHAKVVHRQDMCKAATESVPCSPSPLAGEIRRGTSAASRMITNSLNHDSPPSTPPRRPDTSTSKISVTVSNKMAAKSAKATAALARREEESLAVPAKRRRVTAEMEGKYVINMPKGTTPRTRKILEQQQAAKGLHRTSVFDRLGAETKADTTTGSKPTGVFSRLGATPETDEDLAWDSDNDSSSSVLQYAGVLKKLGRGPAKASPQPALTVKAKATSSATTAAAPTLRRLALSSRSGLERKPESLSKVSIIKRLGAAALVPEAQDSQVTSTKSKSSAEVKVTIKRTLVGPRGSSSSEGLGAQMDHAGTVSVFKRLGRRTF</sequence>